<name>TAF1B_CHICK</name>
<proteinExistence type="evidence at transcript level"/>
<reference key="1">
    <citation type="journal article" date="2005" name="Genome Biol.">
        <title>Full-length cDNAs from chicken bursal lymphocytes to facilitate gene function analysis.</title>
        <authorList>
            <person name="Caldwell R.B."/>
            <person name="Kierzek A.M."/>
            <person name="Arakawa H."/>
            <person name="Bezzubov Y."/>
            <person name="Zaim J."/>
            <person name="Fiedler P."/>
            <person name="Kutter S."/>
            <person name="Blagodatski A."/>
            <person name="Kostovska D."/>
            <person name="Koter M."/>
            <person name="Plachy J."/>
            <person name="Carninci P."/>
            <person name="Hayashizaki Y."/>
            <person name="Buerstedde J.-M."/>
        </authorList>
    </citation>
    <scope>NUCLEOTIDE SEQUENCE [LARGE SCALE MRNA]</scope>
    <source>
        <strain>CB</strain>
        <tissue>Bursa of Fabricius</tissue>
    </source>
</reference>
<reference key="2">
    <citation type="journal article" date="2004" name="Nature">
        <title>Sequence and comparative analysis of the chicken genome provide unique perspectives on vertebrate evolution.</title>
        <authorList>
            <person name="Hillier L.W."/>
            <person name="Miller W."/>
            <person name="Birney E."/>
            <person name="Warren W."/>
            <person name="Hardison R.C."/>
            <person name="Ponting C.P."/>
            <person name="Bork P."/>
            <person name="Burt D.W."/>
            <person name="Groenen M.A.M."/>
            <person name="Delany M.E."/>
            <person name="Dodgson J.B."/>
            <person name="Chinwalla A.T."/>
            <person name="Cliften P.F."/>
            <person name="Clifton S.W."/>
            <person name="Delehaunty K.D."/>
            <person name="Fronick C."/>
            <person name="Fulton R.S."/>
            <person name="Graves T.A."/>
            <person name="Kremitzki C."/>
            <person name="Layman D."/>
            <person name="Magrini V."/>
            <person name="McPherson J.D."/>
            <person name="Miner T.L."/>
            <person name="Minx P."/>
            <person name="Nash W.E."/>
            <person name="Nhan M.N."/>
            <person name="Nelson J.O."/>
            <person name="Oddy L.G."/>
            <person name="Pohl C.S."/>
            <person name="Randall-Maher J."/>
            <person name="Smith S.M."/>
            <person name="Wallis J.W."/>
            <person name="Yang S.-P."/>
            <person name="Romanov M.N."/>
            <person name="Rondelli C.M."/>
            <person name="Paton B."/>
            <person name="Smith J."/>
            <person name="Morrice D."/>
            <person name="Daniels L."/>
            <person name="Tempest H.G."/>
            <person name="Robertson L."/>
            <person name="Masabanda J.S."/>
            <person name="Griffin D.K."/>
            <person name="Vignal A."/>
            <person name="Fillon V."/>
            <person name="Jacobbson L."/>
            <person name="Kerje S."/>
            <person name="Andersson L."/>
            <person name="Crooijmans R.P."/>
            <person name="Aerts J."/>
            <person name="van der Poel J.J."/>
            <person name="Ellegren H."/>
            <person name="Caldwell R.B."/>
            <person name="Hubbard S.J."/>
            <person name="Grafham D.V."/>
            <person name="Kierzek A.M."/>
            <person name="McLaren S.R."/>
            <person name="Overton I.M."/>
            <person name="Arakawa H."/>
            <person name="Beattie K.J."/>
            <person name="Bezzubov Y."/>
            <person name="Boardman P.E."/>
            <person name="Bonfield J.K."/>
            <person name="Croning M.D.R."/>
            <person name="Davies R.M."/>
            <person name="Francis M.D."/>
            <person name="Humphray S.J."/>
            <person name="Scott C.E."/>
            <person name="Taylor R.G."/>
            <person name="Tickle C."/>
            <person name="Brown W.R.A."/>
            <person name="Rogers J."/>
            <person name="Buerstedde J.-M."/>
            <person name="Wilson S.A."/>
            <person name="Stubbs L."/>
            <person name="Ovcharenko I."/>
            <person name="Gordon L."/>
            <person name="Lucas S."/>
            <person name="Miller M.M."/>
            <person name="Inoko H."/>
            <person name="Shiina T."/>
            <person name="Kaufman J."/>
            <person name="Salomonsen J."/>
            <person name="Skjoedt K."/>
            <person name="Wong G.K.-S."/>
            <person name="Wang J."/>
            <person name="Liu B."/>
            <person name="Wang J."/>
            <person name="Yu J."/>
            <person name="Yang H."/>
            <person name="Nefedov M."/>
            <person name="Koriabine M."/>
            <person name="Dejong P.J."/>
            <person name="Goodstadt L."/>
            <person name="Webber C."/>
            <person name="Dickens N.J."/>
            <person name="Letunic I."/>
            <person name="Suyama M."/>
            <person name="Torrents D."/>
            <person name="von Mering C."/>
            <person name="Zdobnov E.M."/>
            <person name="Makova K."/>
            <person name="Nekrutenko A."/>
            <person name="Elnitski L."/>
            <person name="Eswara P."/>
            <person name="King D.C."/>
            <person name="Yang S.-P."/>
            <person name="Tyekucheva S."/>
            <person name="Radakrishnan A."/>
            <person name="Harris R.S."/>
            <person name="Chiaromonte F."/>
            <person name="Taylor J."/>
            <person name="He J."/>
            <person name="Rijnkels M."/>
            <person name="Griffiths-Jones S."/>
            <person name="Ureta-Vidal A."/>
            <person name="Hoffman M.M."/>
            <person name="Severin J."/>
            <person name="Searle S.M.J."/>
            <person name="Law A.S."/>
            <person name="Speed D."/>
            <person name="Waddington D."/>
            <person name="Cheng Z."/>
            <person name="Tuzun E."/>
            <person name="Eichler E."/>
            <person name="Bao Z."/>
            <person name="Flicek P."/>
            <person name="Shteynberg D.D."/>
            <person name="Brent M.R."/>
            <person name="Bye J.M."/>
            <person name="Huckle E.J."/>
            <person name="Chatterji S."/>
            <person name="Dewey C."/>
            <person name="Pachter L."/>
            <person name="Kouranov A."/>
            <person name="Mourelatos Z."/>
            <person name="Hatzigeorgiou A.G."/>
            <person name="Paterson A.H."/>
            <person name="Ivarie R."/>
            <person name="Brandstrom M."/>
            <person name="Axelsson E."/>
            <person name="Backstrom N."/>
            <person name="Berlin S."/>
            <person name="Webster M.T."/>
            <person name="Pourquie O."/>
            <person name="Reymond A."/>
            <person name="Ucla C."/>
            <person name="Antonarakis S.E."/>
            <person name="Long M."/>
            <person name="Emerson J.J."/>
            <person name="Betran E."/>
            <person name="Dupanloup I."/>
            <person name="Kaessmann H."/>
            <person name="Hinrichs A.S."/>
            <person name="Bejerano G."/>
            <person name="Furey T.S."/>
            <person name="Harte R.A."/>
            <person name="Raney B."/>
            <person name="Siepel A."/>
            <person name="Kent W.J."/>
            <person name="Haussler D."/>
            <person name="Eyras E."/>
            <person name="Castelo R."/>
            <person name="Abril J.F."/>
            <person name="Castellano S."/>
            <person name="Camara F."/>
            <person name="Parra G."/>
            <person name="Guigo R."/>
            <person name="Bourque G."/>
            <person name="Tesler G."/>
            <person name="Pevzner P.A."/>
            <person name="Smit A."/>
            <person name="Fulton L.A."/>
            <person name="Mardis E.R."/>
            <person name="Wilson R.K."/>
        </authorList>
    </citation>
    <scope>NUCLEOTIDE SEQUENCE [LARGE SCALE GENOMIC DNA]</scope>
    <source>
        <strain>Red jungle fowl</strain>
    </source>
</reference>
<organism>
    <name type="scientific">Gallus gallus</name>
    <name type="common">Chicken</name>
    <dbReference type="NCBI Taxonomy" id="9031"/>
    <lineage>
        <taxon>Eukaryota</taxon>
        <taxon>Metazoa</taxon>
        <taxon>Chordata</taxon>
        <taxon>Craniata</taxon>
        <taxon>Vertebrata</taxon>
        <taxon>Euteleostomi</taxon>
        <taxon>Archelosauria</taxon>
        <taxon>Archosauria</taxon>
        <taxon>Dinosauria</taxon>
        <taxon>Saurischia</taxon>
        <taxon>Theropoda</taxon>
        <taxon>Coelurosauria</taxon>
        <taxon>Aves</taxon>
        <taxon>Neognathae</taxon>
        <taxon>Galloanserae</taxon>
        <taxon>Galliformes</taxon>
        <taxon>Phasianidae</taxon>
        <taxon>Phasianinae</taxon>
        <taxon>Gallus</taxon>
    </lineage>
</organism>
<keyword id="KW-0238">DNA-binding</keyword>
<keyword id="KW-0479">Metal-binding</keyword>
<keyword id="KW-0539">Nucleus</keyword>
<keyword id="KW-1185">Reference proteome</keyword>
<keyword id="KW-0804">Transcription</keyword>
<keyword id="KW-0805">Transcription regulation</keyword>
<keyword id="KW-0862">Zinc</keyword>
<keyword id="KW-0863">Zinc-finger</keyword>
<feature type="chain" id="PRO_0000416870" description="TATA box-binding protein-associated factor RNA polymerase I subunit B">
    <location>
        <begin position="1"/>
        <end position="582"/>
    </location>
</feature>
<feature type="zinc finger region" description="RRN7-type">
    <location>
        <begin position="4"/>
        <end position="39"/>
    </location>
</feature>
<feature type="region of interest" description="B-reader" evidence="1">
    <location>
        <begin position="40"/>
        <end position="68"/>
    </location>
</feature>
<feature type="region of interest" description="B-linker" evidence="1">
    <location>
        <begin position="69"/>
        <end position="73"/>
    </location>
</feature>
<feature type="region of interest" description="N-terminal cyclin fold" evidence="1">
    <location>
        <begin position="74"/>
        <end position="255"/>
    </location>
</feature>
<feature type="region of interest" description="C-terminal cyclin fold" evidence="1">
    <location>
        <begin position="256"/>
        <end position="366"/>
    </location>
</feature>
<feature type="binding site" evidence="1">
    <location>
        <position position="13"/>
    </location>
    <ligand>
        <name>Zn(2+)</name>
        <dbReference type="ChEBI" id="CHEBI:29105"/>
    </ligand>
</feature>
<feature type="binding site" evidence="1">
    <location>
        <position position="16"/>
    </location>
    <ligand>
        <name>Zn(2+)</name>
        <dbReference type="ChEBI" id="CHEBI:29105"/>
    </ligand>
</feature>
<feature type="binding site" evidence="1">
    <location>
        <position position="31"/>
    </location>
    <ligand>
        <name>Zn(2+)</name>
        <dbReference type="ChEBI" id="CHEBI:29105"/>
    </ligand>
</feature>
<feature type="binding site" evidence="1">
    <location>
        <position position="34"/>
    </location>
    <ligand>
        <name>Zn(2+)</name>
        <dbReference type="ChEBI" id="CHEBI:29105"/>
    </ligand>
</feature>
<feature type="sequence conflict" description="In Ref. 1; CAG32024." evidence="2" ref="1">
    <original>S</original>
    <variation>I</variation>
    <location>
        <position position="159"/>
    </location>
</feature>
<feature type="sequence conflict" description="In Ref. 1; CAG32024." evidence="2" ref="1">
    <original>I</original>
    <variation>N</variation>
    <location>
        <position position="451"/>
    </location>
</feature>
<feature type="sequence conflict" description="In Ref. 1; CAG32024." evidence="2" ref="1">
    <original>V</original>
    <variation>A</variation>
    <location>
        <position position="560"/>
    </location>
</feature>
<evidence type="ECO:0000250" key="1"/>
<evidence type="ECO:0000305" key="2"/>
<gene>
    <name type="primary">TAF1B</name>
    <name type="ORF">RCJMB04_16d10</name>
</gene>
<sequence>MDEEDAGDFNERCAQCSEVNWGLTDGGRFYCRTCHNVIERTREVVSTDVIPNARVQTISKGSRSQKKTDEGWEWYVCEGFQLVLKQQAEALEALGVCPQMKDEVLCNFWRRYLQKSQQAYCNRPAGETIKALSVCDSSTDMDSEPEQHSLLHFLSVSESDGDLQTDCSYASSAGKVSESTSVCSGSVDGSLYVRKNRKEKLRMSMPMTLSFCYMALLWLKEPMTLSDLLRFVVEGHIPYFNAYQHFPEKMKLYGLDLRIFCVESWPVYEEVYNKMVELAAFLDLPRFPDITDNCFLHPDVLCMKYLMEANLPDELHNWTCRLVKKTSIGEVDFLTLTPGNKSTRKVKYDVLAAAVIVVVLKLLFLLDDHYEWLLSDFSAEGNKNNKEGEGGPYFEFKKWYRVIKCTLDVEQKKLDEEKAKYLWKCEKPLFYSVKKKSKILRRRQMVENLQIQFGKLSGSVQPAGRPNPSSFLLSWSEESTDGSCFHGHSLKGILQEKHGLLTAINTDYWLCTDKLCNEKLCGHLAHYREEDFPKSYHFVLRLFSFLLRIQPSSIHEEVCVIEHKLFNKKLYKKPKRKRSLRK</sequence>
<accession>Q5ZJR9</accession>
<accession>F1NKU3</accession>
<dbReference type="EMBL" id="AJ720365">
    <property type="protein sequence ID" value="CAG32024.1"/>
    <property type="molecule type" value="mRNA"/>
</dbReference>
<dbReference type="EMBL" id="AADN02018707">
    <property type="status" value="NOT_ANNOTATED_CDS"/>
    <property type="molecule type" value="Genomic_DNA"/>
</dbReference>
<dbReference type="EMBL" id="AADN02018708">
    <property type="status" value="NOT_ANNOTATED_CDS"/>
    <property type="molecule type" value="Genomic_DNA"/>
</dbReference>
<dbReference type="RefSeq" id="NP_001006416.1">
    <property type="nucleotide sequence ID" value="NM_001006416.1"/>
</dbReference>
<dbReference type="FunCoup" id="Q5ZJR9">
    <property type="interactions" value="1699"/>
</dbReference>
<dbReference type="PaxDb" id="9031-ENSGALP00000026465"/>
<dbReference type="GeneID" id="421933"/>
<dbReference type="KEGG" id="gga:421933"/>
<dbReference type="CTD" id="9014"/>
<dbReference type="VEuPathDB" id="HostDB:geneid_421933"/>
<dbReference type="eggNOG" id="ENOG502QVGU">
    <property type="taxonomic scope" value="Eukaryota"/>
</dbReference>
<dbReference type="HOGENOM" id="CLU_032815_0_0_1"/>
<dbReference type="InParanoid" id="Q5ZJR9"/>
<dbReference type="OrthoDB" id="10069252at2759"/>
<dbReference type="Reactome" id="R-GGA-5250924">
    <property type="pathway name" value="B-WICH complex positively regulates rRNA expression"/>
</dbReference>
<dbReference type="Reactome" id="R-GGA-73762">
    <property type="pathway name" value="RNA Polymerase I Transcription Initiation"/>
</dbReference>
<dbReference type="Reactome" id="R-GGA-73772">
    <property type="pathway name" value="RNA Polymerase I Promoter Escape"/>
</dbReference>
<dbReference type="Reactome" id="R-GGA-73863">
    <property type="pathway name" value="RNA Polymerase I Transcription Termination"/>
</dbReference>
<dbReference type="PRO" id="PR:Q5ZJR9"/>
<dbReference type="Proteomes" id="UP000000539">
    <property type="component" value="Chromosome 3"/>
</dbReference>
<dbReference type="Bgee" id="ENSGALG00000038495">
    <property type="expression patterns" value="Expressed in spermatocyte and 13 other cell types or tissues"/>
</dbReference>
<dbReference type="GO" id="GO:0070860">
    <property type="term" value="C:RNA polymerase I core factor complex"/>
    <property type="evidence" value="ECO:0000318"/>
    <property type="project" value="GO_Central"/>
</dbReference>
<dbReference type="GO" id="GO:0005668">
    <property type="term" value="C:RNA polymerase transcription factor SL1 complex"/>
    <property type="evidence" value="ECO:0000318"/>
    <property type="project" value="GO_Central"/>
</dbReference>
<dbReference type="GO" id="GO:0001164">
    <property type="term" value="F:RNA polymerase I core promoter sequence-specific DNA binding"/>
    <property type="evidence" value="ECO:0000250"/>
    <property type="project" value="UniProtKB"/>
</dbReference>
<dbReference type="GO" id="GO:0008270">
    <property type="term" value="F:zinc ion binding"/>
    <property type="evidence" value="ECO:0007669"/>
    <property type="project" value="UniProtKB-KW"/>
</dbReference>
<dbReference type="GO" id="GO:0042790">
    <property type="term" value="P:nucleolar large rRNA transcription by RNA polymerase I"/>
    <property type="evidence" value="ECO:0000318"/>
    <property type="project" value="GO_Central"/>
</dbReference>
<dbReference type="GO" id="GO:0001188">
    <property type="term" value="P:RNA polymerase I preinitiation complex assembly"/>
    <property type="evidence" value="ECO:0000250"/>
    <property type="project" value="UniProtKB"/>
</dbReference>
<dbReference type="InterPro" id="IPR048538">
    <property type="entry name" value="Rrn7_cyclin_C"/>
</dbReference>
<dbReference type="InterPro" id="IPR048540">
    <property type="entry name" value="Rrn7_cyclin_N"/>
</dbReference>
<dbReference type="InterPro" id="IPR033599">
    <property type="entry name" value="TAF1B/Rrn7"/>
</dbReference>
<dbReference type="InterPro" id="IPR021752">
    <property type="entry name" value="TF_Rrn7_Zf"/>
</dbReference>
<dbReference type="PANTHER" id="PTHR31576">
    <property type="entry name" value="TATA BOX-BINDING PROTEIN-ASSOCIATED FACTOR RNA POLYMERASE I SUBUNIT B"/>
    <property type="match status" value="1"/>
</dbReference>
<dbReference type="PANTHER" id="PTHR31576:SF2">
    <property type="entry name" value="TATA BOX-BINDING PROTEIN-ASSOCIATED FACTOR RNA POLYMERASE I SUBUNIT B"/>
    <property type="match status" value="1"/>
</dbReference>
<dbReference type="Pfam" id="PF20645">
    <property type="entry name" value="Rrn7_cyclin_C"/>
    <property type="match status" value="1"/>
</dbReference>
<dbReference type="Pfam" id="PF20644">
    <property type="entry name" value="Rrn7_cyclin_N"/>
    <property type="match status" value="1"/>
</dbReference>
<dbReference type="Pfam" id="PF11781">
    <property type="entry name" value="Zn_ribbon_RRN7"/>
    <property type="match status" value="1"/>
</dbReference>
<comment type="function">
    <text evidence="1">Component of RNA polymerase I core factor complex that acts as a GTF2B/TFIIB-like factor and plays a key role in multiple steps during transcription initiation such as pre-initiation complex (PIC) assembly and postpolymerase recruitment events in polymerase I (Pol I) transcription. Binds rDNA promoters and plays a role in Pol I recruitment (By similarity).</text>
</comment>
<comment type="subcellular location">
    <subcellularLocation>
        <location evidence="1">Nucleus</location>
        <location evidence="1">Nucleolus</location>
    </subcellularLocation>
</comment>
<comment type="domain">
    <text evidence="1">Although it shares weak sequence similarity with GTF2B/TFIIB, displays a similar subdomain organization as GTF2B/TFIIB, with a N-terminal zinc finger, a connecting region (composed of B-reader and B-linker regions), followed by 2 cyclin folds. The RRN7-type zinc finger plays an essential postrecruitment role in Pol I transcription at a step preceding synthesis of the first 40 nucleotides (By similarity).</text>
</comment>
<comment type="similarity">
    <text evidence="2">Belongs to the RRN7/TAF1B family.</text>
</comment>
<protein>
    <recommendedName>
        <fullName>TATA box-binding protein-associated factor RNA polymerase I subunit B</fullName>
    </recommendedName>
    <alternativeName>
        <fullName>RNA polymerase I-specific TBP-associated factor 63 kDa</fullName>
        <shortName>TAFI63</shortName>
    </alternativeName>
    <alternativeName>
        <fullName>TATA box-binding protein-associated factor 1B</fullName>
        <shortName>TBP-associated factor 1B</shortName>
    </alternativeName>
</protein>